<name>RIBB_CHLL2</name>
<proteinExistence type="inferred from homology"/>
<reference key="1">
    <citation type="submission" date="2008-05" db="EMBL/GenBank/DDBJ databases">
        <title>Complete sequence of Chlorobium limicola DSM 245.</title>
        <authorList>
            <consortium name="US DOE Joint Genome Institute"/>
            <person name="Lucas S."/>
            <person name="Copeland A."/>
            <person name="Lapidus A."/>
            <person name="Glavina del Rio T."/>
            <person name="Dalin E."/>
            <person name="Tice H."/>
            <person name="Bruce D."/>
            <person name="Goodwin L."/>
            <person name="Pitluck S."/>
            <person name="Schmutz J."/>
            <person name="Larimer F."/>
            <person name="Land M."/>
            <person name="Hauser L."/>
            <person name="Kyrpides N."/>
            <person name="Ovchinnikova G."/>
            <person name="Zhao F."/>
            <person name="Li T."/>
            <person name="Liu Z."/>
            <person name="Overmann J."/>
            <person name="Bryant D.A."/>
            <person name="Richardson P."/>
        </authorList>
    </citation>
    <scope>NUCLEOTIDE SEQUENCE [LARGE SCALE GENOMIC DNA]</scope>
    <source>
        <strain>DSM 245 / NBRC 103803 / 6330</strain>
    </source>
</reference>
<comment type="function">
    <text evidence="1">Catalyzes the conversion of D-ribulose 5-phosphate to formate and 3,4-dihydroxy-2-butanone 4-phosphate.</text>
</comment>
<comment type="catalytic activity">
    <reaction evidence="1">
        <text>D-ribulose 5-phosphate = (2S)-2-hydroxy-3-oxobutyl phosphate + formate + H(+)</text>
        <dbReference type="Rhea" id="RHEA:18457"/>
        <dbReference type="ChEBI" id="CHEBI:15378"/>
        <dbReference type="ChEBI" id="CHEBI:15740"/>
        <dbReference type="ChEBI" id="CHEBI:58121"/>
        <dbReference type="ChEBI" id="CHEBI:58830"/>
        <dbReference type="EC" id="4.1.99.12"/>
    </reaction>
</comment>
<comment type="cofactor">
    <cofactor evidence="1">
        <name>Mg(2+)</name>
        <dbReference type="ChEBI" id="CHEBI:18420"/>
    </cofactor>
    <cofactor evidence="1">
        <name>Mn(2+)</name>
        <dbReference type="ChEBI" id="CHEBI:29035"/>
    </cofactor>
    <text evidence="1">Binds 2 divalent metal cations per subunit. Magnesium or manganese.</text>
</comment>
<comment type="pathway">
    <text evidence="1">Cofactor biosynthesis; riboflavin biosynthesis; 2-hydroxy-3-oxobutyl phosphate from D-ribulose 5-phosphate: step 1/1.</text>
</comment>
<comment type="subunit">
    <text evidence="1">Homodimer.</text>
</comment>
<comment type="similarity">
    <text evidence="1">Belongs to the DHBP synthase family.</text>
</comment>
<accession>B3EEP4</accession>
<protein>
    <recommendedName>
        <fullName evidence="1">3,4-dihydroxy-2-butanone 4-phosphate synthase</fullName>
        <shortName evidence="1">DHBP synthase</shortName>
        <ecNumber evidence="1">4.1.99.12</ecNumber>
    </recommendedName>
</protein>
<evidence type="ECO:0000255" key="1">
    <source>
        <dbReference type="HAMAP-Rule" id="MF_00180"/>
    </source>
</evidence>
<dbReference type="EC" id="4.1.99.12" evidence="1"/>
<dbReference type="EMBL" id="CP001097">
    <property type="protein sequence ID" value="ACD89277.1"/>
    <property type="molecule type" value="Genomic_DNA"/>
</dbReference>
<dbReference type="RefSeq" id="WP_012465158.1">
    <property type="nucleotide sequence ID" value="NC_010803.1"/>
</dbReference>
<dbReference type="SMR" id="B3EEP4"/>
<dbReference type="STRING" id="290315.Clim_0178"/>
<dbReference type="KEGG" id="cli:Clim_0178"/>
<dbReference type="eggNOG" id="COG0108">
    <property type="taxonomic scope" value="Bacteria"/>
</dbReference>
<dbReference type="HOGENOM" id="CLU_020273_3_0_10"/>
<dbReference type="OrthoDB" id="9793111at2"/>
<dbReference type="UniPathway" id="UPA00275">
    <property type="reaction ID" value="UER00399"/>
</dbReference>
<dbReference type="Proteomes" id="UP000008841">
    <property type="component" value="Chromosome"/>
</dbReference>
<dbReference type="GO" id="GO:0005829">
    <property type="term" value="C:cytosol"/>
    <property type="evidence" value="ECO:0007669"/>
    <property type="project" value="TreeGrafter"/>
</dbReference>
<dbReference type="GO" id="GO:0008686">
    <property type="term" value="F:3,4-dihydroxy-2-butanone-4-phosphate synthase activity"/>
    <property type="evidence" value="ECO:0007669"/>
    <property type="project" value="UniProtKB-UniRule"/>
</dbReference>
<dbReference type="GO" id="GO:0000287">
    <property type="term" value="F:magnesium ion binding"/>
    <property type="evidence" value="ECO:0007669"/>
    <property type="project" value="UniProtKB-UniRule"/>
</dbReference>
<dbReference type="GO" id="GO:0030145">
    <property type="term" value="F:manganese ion binding"/>
    <property type="evidence" value="ECO:0007669"/>
    <property type="project" value="UniProtKB-UniRule"/>
</dbReference>
<dbReference type="GO" id="GO:0009231">
    <property type="term" value="P:riboflavin biosynthetic process"/>
    <property type="evidence" value="ECO:0007669"/>
    <property type="project" value="UniProtKB-UniRule"/>
</dbReference>
<dbReference type="FunFam" id="3.90.870.10:FF:000002">
    <property type="entry name" value="3,4-dihydroxy-2-butanone 4-phosphate synthase"/>
    <property type="match status" value="1"/>
</dbReference>
<dbReference type="Gene3D" id="3.90.870.10">
    <property type="entry name" value="DHBP synthase"/>
    <property type="match status" value="1"/>
</dbReference>
<dbReference type="HAMAP" id="MF_00180">
    <property type="entry name" value="RibB"/>
    <property type="match status" value="1"/>
</dbReference>
<dbReference type="InterPro" id="IPR017945">
    <property type="entry name" value="DHBP_synth_RibB-like_a/b_dom"/>
</dbReference>
<dbReference type="InterPro" id="IPR000422">
    <property type="entry name" value="DHBP_synthase_RibB"/>
</dbReference>
<dbReference type="NCBIfam" id="TIGR00506">
    <property type="entry name" value="ribB"/>
    <property type="match status" value="1"/>
</dbReference>
<dbReference type="PANTHER" id="PTHR21327:SF38">
    <property type="entry name" value="3,4-DIHYDROXY-2-BUTANONE 4-PHOSPHATE SYNTHASE"/>
    <property type="match status" value="1"/>
</dbReference>
<dbReference type="PANTHER" id="PTHR21327">
    <property type="entry name" value="GTP CYCLOHYDROLASE II-RELATED"/>
    <property type="match status" value="1"/>
</dbReference>
<dbReference type="Pfam" id="PF00926">
    <property type="entry name" value="DHBP_synthase"/>
    <property type="match status" value="1"/>
</dbReference>
<dbReference type="SUPFAM" id="SSF55821">
    <property type="entry name" value="YrdC/RibB"/>
    <property type="match status" value="1"/>
</dbReference>
<feature type="chain" id="PRO_1000098275" description="3,4-dihydroxy-2-butanone 4-phosphate synthase">
    <location>
        <begin position="1"/>
        <end position="222"/>
    </location>
</feature>
<feature type="binding site" evidence="1">
    <location>
        <begin position="37"/>
        <end position="38"/>
    </location>
    <ligand>
        <name>D-ribulose 5-phosphate</name>
        <dbReference type="ChEBI" id="CHEBI:58121"/>
    </ligand>
</feature>
<feature type="binding site" evidence="1">
    <location>
        <position position="38"/>
    </location>
    <ligand>
        <name>Mg(2+)</name>
        <dbReference type="ChEBI" id="CHEBI:18420"/>
        <label>1</label>
    </ligand>
</feature>
<feature type="binding site" evidence="1">
    <location>
        <position position="38"/>
    </location>
    <ligand>
        <name>Mg(2+)</name>
        <dbReference type="ChEBI" id="CHEBI:18420"/>
        <label>2</label>
    </ligand>
</feature>
<feature type="binding site" evidence="1">
    <location>
        <position position="42"/>
    </location>
    <ligand>
        <name>D-ribulose 5-phosphate</name>
        <dbReference type="ChEBI" id="CHEBI:58121"/>
    </ligand>
</feature>
<feature type="binding site" evidence="1">
    <location>
        <begin position="150"/>
        <end position="154"/>
    </location>
    <ligand>
        <name>D-ribulose 5-phosphate</name>
        <dbReference type="ChEBI" id="CHEBI:58121"/>
    </ligand>
</feature>
<feature type="binding site" evidence="1">
    <location>
        <position position="153"/>
    </location>
    <ligand>
        <name>Mg(2+)</name>
        <dbReference type="ChEBI" id="CHEBI:18420"/>
        <label>2</label>
    </ligand>
</feature>
<feature type="binding site" evidence="1">
    <location>
        <position position="174"/>
    </location>
    <ligand>
        <name>D-ribulose 5-phosphate</name>
        <dbReference type="ChEBI" id="CHEBI:58121"/>
    </ligand>
</feature>
<feature type="site" description="Essential for catalytic activity" evidence="1">
    <location>
        <position position="136"/>
    </location>
</feature>
<feature type="site" description="Essential for catalytic activity" evidence="1">
    <location>
        <position position="174"/>
    </location>
</feature>
<organism>
    <name type="scientific">Chlorobium limicola (strain DSM 245 / NBRC 103803 / 6330)</name>
    <dbReference type="NCBI Taxonomy" id="290315"/>
    <lineage>
        <taxon>Bacteria</taxon>
        <taxon>Pseudomonadati</taxon>
        <taxon>Chlorobiota</taxon>
        <taxon>Chlorobiia</taxon>
        <taxon>Chlorobiales</taxon>
        <taxon>Chlorobiaceae</taxon>
        <taxon>Chlorobium/Pelodictyon group</taxon>
        <taxon>Chlorobium</taxon>
    </lineage>
</organism>
<keyword id="KW-0456">Lyase</keyword>
<keyword id="KW-0460">Magnesium</keyword>
<keyword id="KW-0464">Manganese</keyword>
<keyword id="KW-0479">Metal-binding</keyword>
<keyword id="KW-0686">Riboflavin biosynthesis</keyword>
<gene>
    <name evidence="1" type="primary">ribB</name>
    <name type="ordered locus">Clim_0178</name>
</gene>
<sequence>MNQMLPEQLLNQLNLVEKALAALRNGQGVLVADDPGRENEADLIFPAESVTIPQMALLIRECSGIVCLCMTDGKIRSLELPMMVENNTSGFQTAFTVSIEAAEGVTTGVSAADRVKTVRTAVSENARPSDLRHPGHIFPLRARPGGVLERPGHTEATVDLMRLAGLSPAGVLCELTNPDGSMAGIEETFAFSVQHGFPVLSIGDIVAYRKSLLQTGSQGLSA</sequence>